<feature type="chain" id="PRO_0000286913" description="Autophagy-related protein 8e">
    <location>
        <begin position="1"/>
        <end position="118"/>
    </location>
</feature>
<feature type="propeptide" id="PRO_0000286914" description="Removed in mature form" evidence="2">
    <location>
        <begin position="119"/>
        <end position="122"/>
    </location>
</feature>
<feature type="site" description="Cleavage; by ATG4" evidence="2">
    <location>
        <begin position="118"/>
        <end position="119"/>
    </location>
</feature>
<feature type="lipid moiety-binding region" description="Phosphatidylethanolamine amidated glycine" evidence="1">
    <location>
        <position position="118"/>
    </location>
</feature>
<feature type="sequence conflict" description="In Ref. 1; BAB88391." evidence="8" ref="1">
    <original>N</original>
    <variation>D</variation>
    <location>
        <position position="11"/>
    </location>
</feature>
<name>ATG8E_ARATH</name>
<protein>
    <recommendedName>
        <fullName>Autophagy-related protein 8e</fullName>
    </recommendedName>
    <alternativeName>
        <fullName>Autophagy-related ubiquitin-like modifier ATG8e</fullName>
        <shortName>AtAPG8e</shortName>
        <shortName>Protein autophagy 8e</shortName>
    </alternativeName>
</protein>
<reference key="1">
    <citation type="journal article" date="2002" name="Plant Physiol.">
        <title>Leaf senescence and starvation-induced chlorosis are accelerated by the disruption of an Arabidopsis autophagy gene.</title>
        <authorList>
            <person name="Hanaoka H."/>
            <person name="Noda T."/>
            <person name="Shirano Y."/>
            <person name="Kato T."/>
            <person name="Hayashi H."/>
            <person name="Shibata D."/>
            <person name="Tabata S."/>
            <person name="Ohsumi Y."/>
        </authorList>
    </citation>
    <scope>NUCLEOTIDE SEQUENCE [MRNA]</scope>
    <scope>NOMENCLATURE</scope>
    <scope>GENE FAMILY</scope>
</reference>
<reference key="2">
    <citation type="journal article" date="1999" name="Nature">
        <title>Sequence and analysis of chromosome 2 of the plant Arabidopsis thaliana.</title>
        <authorList>
            <person name="Lin X."/>
            <person name="Kaul S."/>
            <person name="Rounsley S.D."/>
            <person name="Shea T.P."/>
            <person name="Benito M.-I."/>
            <person name="Town C.D."/>
            <person name="Fujii C.Y."/>
            <person name="Mason T.M."/>
            <person name="Bowman C.L."/>
            <person name="Barnstead M.E."/>
            <person name="Feldblyum T.V."/>
            <person name="Buell C.R."/>
            <person name="Ketchum K.A."/>
            <person name="Lee J.J."/>
            <person name="Ronning C.M."/>
            <person name="Koo H.L."/>
            <person name="Moffat K.S."/>
            <person name="Cronin L.A."/>
            <person name="Shen M."/>
            <person name="Pai G."/>
            <person name="Van Aken S."/>
            <person name="Umayam L."/>
            <person name="Tallon L.J."/>
            <person name="Gill J.E."/>
            <person name="Adams M.D."/>
            <person name="Carrera A.J."/>
            <person name="Creasy T.H."/>
            <person name="Goodman H.M."/>
            <person name="Somerville C.R."/>
            <person name="Copenhaver G.P."/>
            <person name="Preuss D."/>
            <person name="Nierman W.C."/>
            <person name="White O."/>
            <person name="Eisen J.A."/>
            <person name="Salzberg S.L."/>
            <person name="Fraser C.M."/>
            <person name="Venter J.C."/>
        </authorList>
    </citation>
    <scope>NUCLEOTIDE SEQUENCE [LARGE SCALE GENOMIC DNA]</scope>
    <source>
        <strain>cv. Columbia</strain>
    </source>
</reference>
<reference key="3">
    <citation type="journal article" date="2017" name="Plant J.">
        <title>Araport11: a complete reannotation of the Arabidopsis thaliana reference genome.</title>
        <authorList>
            <person name="Cheng C.Y."/>
            <person name="Krishnakumar V."/>
            <person name="Chan A.P."/>
            <person name="Thibaud-Nissen F."/>
            <person name="Schobel S."/>
            <person name="Town C.D."/>
        </authorList>
    </citation>
    <scope>GENOME REANNOTATION</scope>
    <source>
        <strain>cv. Columbia</strain>
    </source>
</reference>
<reference key="4">
    <citation type="journal article" date="2003" name="Science">
        <title>Empirical analysis of transcriptional activity in the Arabidopsis genome.</title>
        <authorList>
            <person name="Yamada K."/>
            <person name="Lim J."/>
            <person name="Dale J.M."/>
            <person name="Chen H."/>
            <person name="Shinn P."/>
            <person name="Palm C.J."/>
            <person name="Southwick A.M."/>
            <person name="Wu H.C."/>
            <person name="Kim C.J."/>
            <person name="Nguyen M."/>
            <person name="Pham P.K."/>
            <person name="Cheuk R.F."/>
            <person name="Karlin-Newmann G."/>
            <person name="Liu S.X."/>
            <person name="Lam B."/>
            <person name="Sakano H."/>
            <person name="Wu T."/>
            <person name="Yu G."/>
            <person name="Miranda M."/>
            <person name="Quach H.L."/>
            <person name="Tripp M."/>
            <person name="Chang C.H."/>
            <person name="Lee J.M."/>
            <person name="Toriumi M.J."/>
            <person name="Chan M.M."/>
            <person name="Tang C.C."/>
            <person name="Onodera C.S."/>
            <person name="Deng J.M."/>
            <person name="Akiyama K."/>
            <person name="Ansari Y."/>
            <person name="Arakawa T."/>
            <person name="Banh J."/>
            <person name="Banno F."/>
            <person name="Bowser L."/>
            <person name="Brooks S.Y."/>
            <person name="Carninci P."/>
            <person name="Chao Q."/>
            <person name="Choy N."/>
            <person name="Enju A."/>
            <person name="Goldsmith A.D."/>
            <person name="Gurjal M."/>
            <person name="Hansen N.F."/>
            <person name="Hayashizaki Y."/>
            <person name="Johnson-Hopson C."/>
            <person name="Hsuan V.W."/>
            <person name="Iida K."/>
            <person name="Karnes M."/>
            <person name="Khan S."/>
            <person name="Koesema E."/>
            <person name="Ishida J."/>
            <person name="Jiang P.X."/>
            <person name="Jones T."/>
            <person name="Kawai J."/>
            <person name="Kamiya A."/>
            <person name="Meyers C."/>
            <person name="Nakajima M."/>
            <person name="Narusaka M."/>
            <person name="Seki M."/>
            <person name="Sakurai T."/>
            <person name="Satou M."/>
            <person name="Tamse R."/>
            <person name="Vaysberg M."/>
            <person name="Wallender E.K."/>
            <person name="Wong C."/>
            <person name="Yamamura Y."/>
            <person name="Yuan S."/>
            <person name="Shinozaki K."/>
            <person name="Davis R.W."/>
            <person name="Theologis A."/>
            <person name="Ecker J.R."/>
        </authorList>
    </citation>
    <scope>NUCLEOTIDE SEQUENCE [LARGE SCALE MRNA]</scope>
    <source>
        <strain>cv. Columbia</strain>
    </source>
</reference>
<reference key="5">
    <citation type="journal article" date="2004" name="Plant Cell">
        <title>Processing of ATG8s, ubiquitin-like proteins, and their deconjugation by ATG4s are essential for plant autophagy.</title>
        <authorList>
            <person name="Yoshimoto K."/>
            <person name="Hanaoka H."/>
            <person name="Sato S."/>
            <person name="Kato T."/>
            <person name="Tabata S."/>
            <person name="Noda T."/>
            <person name="Ohsumi Y."/>
        </authorList>
    </citation>
    <scope>TISSUE SPECIFICITY</scope>
</reference>
<reference key="6">
    <citation type="journal article" date="2013" name="Plant Cell">
        <title>A BAR-domain protein SH3P2, which binds to phosphatidylinositol 3-phosphate and ATG8, regulates autophagosome formation in Arabidopsis.</title>
        <authorList>
            <person name="Zhuang X."/>
            <person name="Wang H."/>
            <person name="Lam S.K."/>
            <person name="Gao C."/>
            <person name="Wang X."/>
            <person name="Cai Y."/>
            <person name="Jiang L."/>
        </authorList>
    </citation>
    <scope>INTERACTION WITH SH3P2</scope>
</reference>
<reference key="7">
    <citation type="journal article" date="2014" name="Plant Cell">
        <title>AUTOPHAGY-RELATED11 plays a critical role in general autophagy- and senescence-induced mitophagy in Arabidopsis.</title>
        <authorList>
            <person name="Li F."/>
            <person name="Chung T."/>
            <person name="Vierstra R.D."/>
        </authorList>
    </citation>
    <scope>INTERACTION WITH ATG1A AND ATG11</scope>
</reference>
<comment type="function">
    <text evidence="1">Ubiquitin-like modifier involved in autophagosomes formation. May mediate the delivery of the autophagosomes to the vacuole via the microtubule cytoskeleton.</text>
</comment>
<comment type="subunit">
    <text evidence="4 6 7">Interacts with ATG4 (By similarity). Interacts with SH3P2 (PubMed:24249832). Interacts with ATG1A and ATG11. Binds to ATG1A and ATG11 on autophagic vesicles (PubMed:24563201).</text>
</comment>
<comment type="subcellular location">
    <subcellularLocation>
        <location evidence="1">Cytoplasmic vesicle</location>
        <location evidence="1">Autophagosome membrane</location>
        <topology evidence="1">Lipid-anchor</topology>
    </subcellularLocation>
    <subcellularLocation>
        <location evidence="1">Vacuole membrane</location>
        <topology evidence="1">Lipid-anchor</topology>
    </subcellularLocation>
    <subcellularLocation>
        <location evidence="3">Cytoplasm</location>
        <location evidence="3">Cytoskeleton</location>
    </subcellularLocation>
</comment>
<comment type="tissue specificity">
    <text evidence="5">Constitutively expressed.</text>
</comment>
<comment type="PTM">
    <text evidence="1">The C-terminal 4 residues are removed by ATG4 to expose Gly-118 at the C-terminus. This Gly-118 forms then a thioester bond with the 'Cys-558' of ATG7 (E1-like activating enzyme) before being transferred to the 'Cys-258' of ATG3 (the specific E2 conjugating enzyme), in order to be finally amidated with phosphatidylethanolamine. This lipid modification anchors ATG8 to autophagosomes.</text>
</comment>
<comment type="similarity">
    <text evidence="8">Belongs to the ATG8 family.</text>
</comment>
<organism>
    <name type="scientific">Arabidopsis thaliana</name>
    <name type="common">Mouse-ear cress</name>
    <dbReference type="NCBI Taxonomy" id="3702"/>
    <lineage>
        <taxon>Eukaryota</taxon>
        <taxon>Viridiplantae</taxon>
        <taxon>Streptophyta</taxon>
        <taxon>Embryophyta</taxon>
        <taxon>Tracheophyta</taxon>
        <taxon>Spermatophyta</taxon>
        <taxon>Magnoliopsida</taxon>
        <taxon>eudicotyledons</taxon>
        <taxon>Gunneridae</taxon>
        <taxon>Pentapetalae</taxon>
        <taxon>rosids</taxon>
        <taxon>malvids</taxon>
        <taxon>Brassicales</taxon>
        <taxon>Brassicaceae</taxon>
        <taxon>Camelineae</taxon>
        <taxon>Arabidopsis</taxon>
    </lineage>
</organism>
<gene>
    <name type="primary">ATG8E</name>
    <name type="synonym">APG8E</name>
    <name type="ordered locus">At2g45170</name>
    <name type="ORF">F4L23</name>
    <name type="ORF">T14P1.2</name>
</gene>
<sequence length="122" mass="13947">MNKGSIFKMDNDFEKRKAEAGRIREKYPDRIPVIVEKAEKSEVPNIDKKKYLVPSDLTVGQFVYVIRKRIKLSAEKAIFIFVDNVLPPTGELMSSVYEDKKDEDGFLYITYSGENTFGASSI</sequence>
<accession>Q8S926</accession>
<accession>Q945K6</accession>
<proteinExistence type="evidence at protein level"/>
<evidence type="ECO:0000250" key="1">
    <source>
        <dbReference type="UniProtKB" id="P38182"/>
    </source>
</evidence>
<evidence type="ECO:0000250" key="2">
    <source>
        <dbReference type="UniProtKB" id="Q2XPP5"/>
    </source>
</evidence>
<evidence type="ECO:0000250" key="3">
    <source>
        <dbReference type="UniProtKB" id="Q8LEM4"/>
    </source>
</evidence>
<evidence type="ECO:0000250" key="4">
    <source>
        <dbReference type="UniProtKB" id="Q9SL04"/>
    </source>
</evidence>
<evidence type="ECO:0000269" key="5">
    <source>
    </source>
</evidence>
<evidence type="ECO:0000269" key="6">
    <source>
    </source>
</evidence>
<evidence type="ECO:0000269" key="7">
    <source>
    </source>
</evidence>
<evidence type="ECO:0000305" key="8"/>
<keyword id="KW-0072">Autophagy</keyword>
<keyword id="KW-0963">Cytoplasm</keyword>
<keyword id="KW-0968">Cytoplasmic vesicle</keyword>
<keyword id="KW-0206">Cytoskeleton</keyword>
<keyword id="KW-0449">Lipoprotein</keyword>
<keyword id="KW-0472">Membrane</keyword>
<keyword id="KW-0493">Microtubule</keyword>
<keyword id="KW-0653">Protein transport</keyword>
<keyword id="KW-1185">Reference proteome</keyword>
<keyword id="KW-0813">Transport</keyword>
<keyword id="KW-0833">Ubl conjugation pathway</keyword>
<keyword id="KW-0926">Vacuole</keyword>
<dbReference type="EMBL" id="AB073179">
    <property type="protein sequence ID" value="BAB88391.1"/>
    <property type="molecule type" value="mRNA"/>
</dbReference>
<dbReference type="EMBL" id="AC002387">
    <property type="status" value="NOT_ANNOTATED_CDS"/>
    <property type="molecule type" value="Genomic_DNA"/>
</dbReference>
<dbReference type="EMBL" id="CP002685">
    <property type="protein sequence ID" value="AEC10520.1"/>
    <property type="molecule type" value="Genomic_DNA"/>
</dbReference>
<dbReference type="EMBL" id="CP002685">
    <property type="protein sequence ID" value="AEC10521.1"/>
    <property type="molecule type" value="Genomic_DNA"/>
</dbReference>
<dbReference type="EMBL" id="AF412106">
    <property type="protein sequence ID" value="AAL06559.1"/>
    <property type="molecule type" value="mRNA"/>
</dbReference>
<dbReference type="EMBL" id="AY074388">
    <property type="protein sequence ID" value="AAL67084.1"/>
    <property type="molecule type" value="mRNA"/>
</dbReference>
<dbReference type="PIR" id="C84887">
    <property type="entry name" value="C84887"/>
</dbReference>
<dbReference type="RefSeq" id="NP_182042.2">
    <property type="nucleotide sequence ID" value="NM_130080.6"/>
</dbReference>
<dbReference type="RefSeq" id="NP_850431.2">
    <property type="nucleotide sequence ID" value="NM_180100.7"/>
</dbReference>
<dbReference type="SMR" id="Q8S926"/>
<dbReference type="BioGRID" id="4461">
    <property type="interactions" value="4"/>
</dbReference>
<dbReference type="FunCoup" id="Q8S926">
    <property type="interactions" value="1913"/>
</dbReference>
<dbReference type="STRING" id="3702.Q8S926"/>
<dbReference type="PaxDb" id="3702-AT2G45170.2"/>
<dbReference type="ProteomicsDB" id="246620"/>
<dbReference type="EnsemblPlants" id="AT2G45170.1">
    <property type="protein sequence ID" value="AT2G45170.1"/>
    <property type="gene ID" value="AT2G45170"/>
</dbReference>
<dbReference type="EnsemblPlants" id="AT2G45170.2">
    <property type="protein sequence ID" value="AT2G45170.2"/>
    <property type="gene ID" value="AT2G45170"/>
</dbReference>
<dbReference type="GeneID" id="819125"/>
<dbReference type="Gramene" id="AT2G45170.1">
    <property type="protein sequence ID" value="AT2G45170.1"/>
    <property type="gene ID" value="AT2G45170"/>
</dbReference>
<dbReference type="Gramene" id="AT2G45170.2">
    <property type="protein sequence ID" value="AT2G45170.2"/>
    <property type="gene ID" value="AT2G45170"/>
</dbReference>
<dbReference type="KEGG" id="ath:AT2G45170"/>
<dbReference type="Araport" id="AT2G45170"/>
<dbReference type="TAIR" id="AT2G45170">
    <property type="gene designation" value="ATG8E"/>
</dbReference>
<dbReference type="eggNOG" id="KOG1654">
    <property type="taxonomic scope" value="Eukaryota"/>
</dbReference>
<dbReference type="HOGENOM" id="CLU_119276_0_1_1"/>
<dbReference type="InParanoid" id="Q8S926"/>
<dbReference type="OMA" id="LPRQNFI"/>
<dbReference type="OrthoDB" id="6738456at2759"/>
<dbReference type="PRO" id="PR:Q8S926"/>
<dbReference type="Proteomes" id="UP000006548">
    <property type="component" value="Chromosome 2"/>
</dbReference>
<dbReference type="ExpressionAtlas" id="Q8S926">
    <property type="expression patterns" value="baseline and differential"/>
</dbReference>
<dbReference type="GO" id="GO:0005776">
    <property type="term" value="C:autophagosome"/>
    <property type="evidence" value="ECO:0000314"/>
    <property type="project" value="TAIR"/>
</dbReference>
<dbReference type="GO" id="GO:0000421">
    <property type="term" value="C:autophagosome membrane"/>
    <property type="evidence" value="ECO:0007669"/>
    <property type="project" value="UniProtKB-SubCell"/>
</dbReference>
<dbReference type="GO" id="GO:0005737">
    <property type="term" value="C:cytoplasm"/>
    <property type="evidence" value="ECO:0000314"/>
    <property type="project" value="TAIR"/>
</dbReference>
<dbReference type="GO" id="GO:0031410">
    <property type="term" value="C:cytoplasmic vesicle"/>
    <property type="evidence" value="ECO:0007669"/>
    <property type="project" value="UniProtKB-KW"/>
</dbReference>
<dbReference type="GO" id="GO:0016020">
    <property type="term" value="C:membrane"/>
    <property type="evidence" value="ECO:0000314"/>
    <property type="project" value="TAIR"/>
</dbReference>
<dbReference type="GO" id="GO:0005874">
    <property type="term" value="C:microtubule"/>
    <property type="evidence" value="ECO:0007669"/>
    <property type="project" value="UniProtKB-KW"/>
</dbReference>
<dbReference type="GO" id="GO:0006914">
    <property type="term" value="P:autophagy"/>
    <property type="evidence" value="ECO:0007669"/>
    <property type="project" value="UniProtKB-KW"/>
</dbReference>
<dbReference type="GO" id="GO:0009267">
    <property type="term" value="P:cellular response to starvation"/>
    <property type="evidence" value="ECO:0000270"/>
    <property type="project" value="TAIR"/>
</dbReference>
<dbReference type="GO" id="GO:0015031">
    <property type="term" value="P:protein transport"/>
    <property type="evidence" value="ECO:0007669"/>
    <property type="project" value="UniProtKB-KW"/>
</dbReference>
<dbReference type="GO" id="GO:0045471">
    <property type="term" value="P:response to ethanol"/>
    <property type="evidence" value="ECO:0000314"/>
    <property type="project" value="TAIR"/>
</dbReference>
<dbReference type="CDD" id="cd16128">
    <property type="entry name" value="Ubl_ATG8"/>
    <property type="match status" value="1"/>
</dbReference>
<dbReference type="FunFam" id="3.10.20.90:FF:000010">
    <property type="entry name" value="Autophagy-related protein"/>
    <property type="match status" value="1"/>
</dbReference>
<dbReference type="Gene3D" id="3.10.20.90">
    <property type="entry name" value="Phosphatidylinositol 3-kinase Catalytic Subunit, Chain A, domain 1"/>
    <property type="match status" value="1"/>
</dbReference>
<dbReference type="InterPro" id="IPR004241">
    <property type="entry name" value="Atg8-like"/>
</dbReference>
<dbReference type="InterPro" id="IPR029071">
    <property type="entry name" value="Ubiquitin-like_domsf"/>
</dbReference>
<dbReference type="PANTHER" id="PTHR10969">
    <property type="entry name" value="MICROTUBULE-ASSOCIATED PROTEINS 1A/1B LIGHT CHAIN 3-RELATED"/>
    <property type="match status" value="1"/>
</dbReference>
<dbReference type="Pfam" id="PF02991">
    <property type="entry name" value="ATG8"/>
    <property type="match status" value="1"/>
</dbReference>
<dbReference type="SUPFAM" id="SSF54236">
    <property type="entry name" value="Ubiquitin-like"/>
    <property type="match status" value="1"/>
</dbReference>